<evidence type="ECO:0000305" key="1"/>
<name>M490_ARATH</name>
<accession>P93304</accession>
<proteinExistence type="predicted"/>
<protein>
    <recommendedName>
        <fullName>Uncharacterized mitochondrial protein AtMg00490</fullName>
    </recommendedName>
    <alternativeName>
        <fullName>ORF107c</fullName>
    </alternativeName>
</protein>
<feature type="chain" id="PRO_0000196773" description="Uncharacterized mitochondrial protein AtMg00490">
    <location>
        <begin position="1"/>
        <end position="107"/>
    </location>
</feature>
<reference key="1">
    <citation type="journal article" date="1997" name="Nat. Genet.">
        <title>The mitochondrial genome of Arabidopsis thaliana contains 57 genes in 366,924 nucleotides.</title>
        <authorList>
            <person name="Unseld M."/>
            <person name="Marienfeld J.R."/>
            <person name="Brandt P."/>
            <person name="Brennicke A."/>
        </authorList>
    </citation>
    <scope>NUCLEOTIDE SEQUENCE [LARGE SCALE GENOMIC DNA]</scope>
    <source>
        <strain>cv. C24</strain>
    </source>
</reference>
<reference key="2">
    <citation type="journal article" date="2018" name="Plant Cell">
        <title>Correction of persistent errors in Arabidopsis reference mitochondrial genomes.</title>
        <authorList>
            <person name="Sloan D.B."/>
            <person name="Wu Z."/>
            <person name="Sharbrough J."/>
        </authorList>
    </citation>
    <scope>NUCLEOTIDE SEQUENCE [LARGE SCALE GENOMIC DNA]</scope>
    <source>
        <strain>cv. Columbia</strain>
    </source>
</reference>
<reference key="3">
    <citation type="journal article" date="1999" name="Nature">
        <title>Sequence and analysis of chromosome 2 of the plant Arabidopsis thaliana.</title>
        <authorList>
            <person name="Lin X."/>
            <person name="Kaul S."/>
            <person name="Rounsley S.D."/>
            <person name="Shea T.P."/>
            <person name="Benito M.-I."/>
            <person name="Town C.D."/>
            <person name="Fujii C.Y."/>
            <person name="Mason T.M."/>
            <person name="Bowman C.L."/>
            <person name="Barnstead M.E."/>
            <person name="Feldblyum T.V."/>
            <person name="Buell C.R."/>
            <person name="Ketchum K.A."/>
            <person name="Lee J.J."/>
            <person name="Ronning C.M."/>
            <person name="Koo H.L."/>
            <person name="Moffat K.S."/>
            <person name="Cronin L.A."/>
            <person name="Shen M."/>
            <person name="Pai G."/>
            <person name="Van Aken S."/>
            <person name="Umayam L."/>
            <person name="Tallon L.J."/>
            <person name="Gill J.E."/>
            <person name="Adams M.D."/>
            <person name="Carrera A.J."/>
            <person name="Creasy T.H."/>
            <person name="Goodman H.M."/>
            <person name="Somerville C.R."/>
            <person name="Copenhaver G.P."/>
            <person name="Preuss D."/>
            <person name="Nierman W.C."/>
            <person name="White O."/>
            <person name="Eisen J.A."/>
            <person name="Salzberg S.L."/>
            <person name="Fraser C.M."/>
            <person name="Venter J.C."/>
        </authorList>
    </citation>
    <scope>NUCLEOTIDE SEQUENCE [LARGE SCALE GENOMIC DNA]</scope>
    <source>
        <strain>cv. Columbia</strain>
    </source>
</reference>
<keyword id="KW-0496">Mitochondrion</keyword>
<keyword id="KW-1185">Reference proteome</keyword>
<geneLocation type="mitochondrion"/>
<comment type="subcellular location">
    <subcellularLocation>
        <location evidence="1">Mitochondrion</location>
    </subcellularLocation>
</comment>
<comment type="miscellaneous">
    <text>A stretch of 270 kb of the mitochondrial genome is duplicated within the centromere of chromosome 2 resulting in the duplication of the gene. The expression of the duplicated gene is not demonstrated.</text>
</comment>
<organism>
    <name type="scientific">Arabidopsis thaliana</name>
    <name type="common">Mouse-ear cress</name>
    <dbReference type="NCBI Taxonomy" id="3702"/>
    <lineage>
        <taxon>Eukaryota</taxon>
        <taxon>Viridiplantae</taxon>
        <taxon>Streptophyta</taxon>
        <taxon>Embryophyta</taxon>
        <taxon>Tracheophyta</taxon>
        <taxon>Spermatophyta</taxon>
        <taxon>Magnoliopsida</taxon>
        <taxon>eudicotyledons</taxon>
        <taxon>Gunneridae</taxon>
        <taxon>Pentapetalae</taxon>
        <taxon>rosids</taxon>
        <taxon>malvids</taxon>
        <taxon>Brassicales</taxon>
        <taxon>Brassicaceae</taxon>
        <taxon>Camelineae</taxon>
        <taxon>Arabidopsis</taxon>
    </lineage>
</organism>
<dbReference type="EMBL" id="Y08501">
    <property type="protein sequence ID" value="CAA69733.1"/>
    <property type="molecule type" value="Genomic_DNA"/>
</dbReference>
<dbReference type="EMBL" id="BK010421">
    <property type="status" value="NOT_ANNOTATED_CDS"/>
    <property type="molecule type" value="Genomic_DNA"/>
</dbReference>
<dbReference type="EMBL" id="AC007729">
    <property type="status" value="NOT_ANNOTATED_CDS"/>
    <property type="molecule type" value="Genomic_DNA"/>
</dbReference>
<dbReference type="RefSeq" id="NP_085509.1">
    <property type="nucleotide sequence ID" value="NC_001284.2"/>
</dbReference>
<dbReference type="PaxDb" id="3702-ATMG00490.1"/>
<dbReference type="EnsemblPlants" id="ATMG00490.1">
    <property type="protein sequence ID" value="ATMG00490.1"/>
    <property type="gene ID" value="ATMG00490"/>
</dbReference>
<dbReference type="Gramene" id="ATMG00490.1">
    <property type="protein sequence ID" value="ATMG00490.1"/>
    <property type="gene ID" value="ATMG00490"/>
</dbReference>
<dbReference type="Araport" id="ATMG00490"/>
<dbReference type="TAIR" id="ATMG00490">
    <property type="gene designation" value="ORF107C"/>
</dbReference>
<dbReference type="HOGENOM" id="CLU_2213568_0_0_1"/>
<dbReference type="InParanoid" id="P93304"/>
<dbReference type="OrthoDB" id="1750590at2759"/>
<dbReference type="PRO" id="PR:P93304"/>
<dbReference type="Proteomes" id="UP000006548">
    <property type="component" value="Mitochondrion MT"/>
</dbReference>
<dbReference type="GO" id="GO:0005739">
    <property type="term" value="C:mitochondrion"/>
    <property type="evidence" value="ECO:0007669"/>
    <property type="project" value="UniProtKB-SubCell"/>
</dbReference>
<dbReference type="InterPro" id="IPR008686">
    <property type="entry name" value="RNA_pol_mitovir"/>
</dbReference>
<dbReference type="PANTHER" id="PTHR34456">
    <property type="entry name" value="MITOVIRUS RNA-DEPENDENT RNA POLYMERASE"/>
    <property type="match status" value="1"/>
</dbReference>
<dbReference type="PANTHER" id="PTHR34456:SF14">
    <property type="entry name" value="MITOVIRUS RNA-DEPENDENT RNA POLYMERASE"/>
    <property type="match status" value="1"/>
</dbReference>
<dbReference type="Pfam" id="PF05919">
    <property type="entry name" value="Mitovir_RNA_pol"/>
    <property type="match status" value="1"/>
</dbReference>
<sequence>MAVRCSKIQRTDGRPGHSLQPAKVSFVAGQPLGYYSSWPLFALSHHMVVWYAAEHVYPSSFFFQSKLPPSEVFAYPGMEVFNEYTLYHAWVDEALSGVSKMELYAKA</sequence>
<gene>
    <name type="ordered locus">AtMg00490</name>
</gene>